<dbReference type="EMBL" id="BC120819">
    <property type="protein sequence ID" value="AAI20820.1"/>
    <property type="molecule type" value="mRNA"/>
</dbReference>
<dbReference type="CCDS" id="CCDS51707.1"/>
<dbReference type="RefSeq" id="NP_083740.1">
    <property type="nucleotide sequence ID" value="NM_029464.3"/>
</dbReference>
<dbReference type="FunCoup" id="Q0VB26">
    <property type="interactions" value="319"/>
</dbReference>
<dbReference type="STRING" id="10090.ENSMUSP00000143851"/>
<dbReference type="iPTMnet" id="Q0VB26"/>
<dbReference type="PhosphoSitePlus" id="Q0VB26"/>
<dbReference type="PaxDb" id="10090-ENSMUSP00000031667"/>
<dbReference type="ProteomicsDB" id="263285"/>
<dbReference type="Antibodypedia" id="49069">
    <property type="antibodies" value="7 antibodies from 5 providers"/>
</dbReference>
<dbReference type="Ensembl" id="ENSMUST00000201683.4">
    <property type="protein sequence ID" value="ENSMUSP00000143851.2"/>
    <property type="gene ID" value="ENSMUSG00000029660.11"/>
</dbReference>
<dbReference type="GeneID" id="75860"/>
<dbReference type="KEGG" id="mmu:75860"/>
<dbReference type="UCSC" id="uc009apu.1">
    <property type="organism name" value="mouse"/>
</dbReference>
<dbReference type="AGR" id="MGI:1923110"/>
<dbReference type="CTD" id="122046"/>
<dbReference type="MGI" id="MGI:1923110">
    <property type="gene designation" value="Tex26"/>
</dbReference>
<dbReference type="VEuPathDB" id="HostDB:ENSMUSG00000029660"/>
<dbReference type="eggNOG" id="ENOG502RY1J">
    <property type="taxonomic scope" value="Eukaryota"/>
</dbReference>
<dbReference type="GeneTree" id="ENSGT00390000009484"/>
<dbReference type="InParanoid" id="Q0VB26"/>
<dbReference type="OMA" id="DTNWDSY"/>
<dbReference type="OrthoDB" id="5984625at2759"/>
<dbReference type="PhylomeDB" id="Q0VB26"/>
<dbReference type="TreeFam" id="TF329443"/>
<dbReference type="BioGRID-ORCS" id="75860">
    <property type="hits" value="6 hits in 76 CRISPR screens"/>
</dbReference>
<dbReference type="PRO" id="PR:Q0VB26"/>
<dbReference type="Proteomes" id="UP000000589">
    <property type="component" value="Chromosome 5"/>
</dbReference>
<dbReference type="RNAct" id="Q0VB26">
    <property type="molecule type" value="protein"/>
</dbReference>
<dbReference type="Bgee" id="ENSMUSG00000029660">
    <property type="expression patterns" value="Expressed in primary oocyte and 49 other cell types or tissues"/>
</dbReference>
<dbReference type="ExpressionAtlas" id="Q0VB26">
    <property type="expression patterns" value="baseline and differential"/>
</dbReference>
<dbReference type="InterPro" id="IPR043460">
    <property type="entry name" value="MEDAG/TEX26"/>
</dbReference>
<dbReference type="PANTHER" id="PTHR33769:SF1">
    <property type="entry name" value="TESTIS-EXPRESSED PROTEIN 26"/>
    <property type="match status" value="1"/>
</dbReference>
<dbReference type="PANTHER" id="PTHR33769">
    <property type="entry name" value="TESTIS-EXPRESSED PROTEIN 26 ISOFORM X3"/>
    <property type="match status" value="1"/>
</dbReference>
<sequence>MARYRNKVSCPAQCDPKLQSTGDTSWDSYATTMKTAFTPKRGMVPDLIRPKSTRRLGFTYSIGDPILNESQYHDEYTWKLRSKENMVKTGTSRGVWNHKTHPGQEFFQWTHPKGKQTQKLPWIEPPSEESIQNAVASQFISCTKRDFVDLTQSKKTMKRFPRSQDRKSLLPRPLDTEFRYNYQIPAQIPELKDFSFKYGCYASLPVASQGLVPSVLSSYIRNEERTKKQTTYECDYGKACLDFLTILDSFTPSQVHDYLQSVSYKDRQILERFIHSHCDIEAKPNKREKQSHRKRP</sequence>
<gene>
    <name type="primary">Tex26</name>
</gene>
<organism>
    <name type="scientific">Mus musculus</name>
    <name type="common">Mouse</name>
    <dbReference type="NCBI Taxonomy" id="10090"/>
    <lineage>
        <taxon>Eukaryota</taxon>
        <taxon>Metazoa</taxon>
        <taxon>Chordata</taxon>
        <taxon>Craniata</taxon>
        <taxon>Vertebrata</taxon>
        <taxon>Euteleostomi</taxon>
        <taxon>Mammalia</taxon>
        <taxon>Eutheria</taxon>
        <taxon>Euarchontoglires</taxon>
        <taxon>Glires</taxon>
        <taxon>Rodentia</taxon>
        <taxon>Myomorpha</taxon>
        <taxon>Muroidea</taxon>
        <taxon>Muridae</taxon>
        <taxon>Murinae</taxon>
        <taxon>Mus</taxon>
        <taxon>Mus</taxon>
    </lineage>
</organism>
<protein>
    <recommendedName>
        <fullName>Testis-expressed protein 26</fullName>
    </recommendedName>
</protein>
<proteinExistence type="evidence at transcript level"/>
<accession>Q0VB26</accession>
<reference key="1">
    <citation type="journal article" date="2004" name="Genome Res.">
        <title>The status, quality, and expansion of the NIH full-length cDNA project: the Mammalian Gene Collection (MGC).</title>
        <authorList>
            <consortium name="The MGC Project Team"/>
        </authorList>
    </citation>
    <scope>NUCLEOTIDE SEQUENCE [LARGE SCALE MRNA]</scope>
    <source>
        <tissue>Brain</tissue>
    </source>
</reference>
<name>TEX26_MOUSE</name>
<keyword id="KW-1185">Reference proteome</keyword>
<evidence type="ECO:0000250" key="1">
    <source>
        <dbReference type="UniProtKB" id="Q8N6G2"/>
    </source>
</evidence>
<feature type="chain" id="PRO_0000263724" description="Testis-expressed protein 26">
    <location>
        <begin position="1"/>
        <end position="296"/>
    </location>
</feature>
<feature type="region of interest" description="Mn 1" evidence="1">
    <location>
        <begin position="30"/>
        <end position="42"/>
    </location>
</feature>
<feature type="region of interest" description="Mn 2" evidence="1">
    <location>
        <begin position="69"/>
        <end position="83"/>
    </location>
</feature>
<feature type="region of interest" description="Mn 3" evidence="1">
    <location>
        <begin position="140"/>
        <end position="153"/>
    </location>
</feature>
<feature type="region of interest" description="Mn 4" evidence="1">
    <location>
        <begin position="175"/>
        <end position="189"/>
    </location>
</feature>
<feature type="region of interest" description="Mn 5" evidence="1">
    <location>
        <begin position="229"/>
        <end position="243"/>
    </location>
</feature>